<proteinExistence type="inferred from homology"/>
<keyword id="KW-0012">Acyltransferase</keyword>
<keyword id="KW-0093">Biotin biosynthesis</keyword>
<keyword id="KW-0663">Pyridoxal phosphate</keyword>
<keyword id="KW-0808">Transferase</keyword>
<protein>
    <recommendedName>
        <fullName>8-amino-7-oxononanoate synthase 1</fullName>
        <shortName>AONS</shortName>
        <ecNumber>2.3.1.47</ecNumber>
    </recommendedName>
    <alternativeName>
        <fullName>7-keto-8-amino-pelargonic acid synthase</fullName>
        <shortName>7-KAP synthase</shortName>
        <shortName>KAPA synthase</shortName>
    </alternativeName>
    <alternativeName>
        <fullName>8-amino-7-ketopelargonate synthase</fullName>
    </alternativeName>
    <alternativeName>
        <fullName>Alpha-oxoamine synthase</fullName>
    </alternativeName>
</protein>
<comment type="function">
    <text evidence="1">Catalyzes the decarboxylative condensation of pimeloyl-[acyl-carrier protein] and L-alanine to produce 8-amino-7-oxononanoate (AON), [acyl-carrier protein], and carbon dioxide.</text>
</comment>
<comment type="catalytic activity">
    <reaction>
        <text>6-carboxyhexanoyl-[ACP] + L-alanine + H(+) = (8S)-8-amino-7-oxononanoate + holo-[ACP] + CO2</text>
        <dbReference type="Rhea" id="RHEA:42288"/>
        <dbReference type="Rhea" id="RHEA-COMP:9685"/>
        <dbReference type="Rhea" id="RHEA-COMP:9955"/>
        <dbReference type="ChEBI" id="CHEBI:15378"/>
        <dbReference type="ChEBI" id="CHEBI:16526"/>
        <dbReference type="ChEBI" id="CHEBI:57972"/>
        <dbReference type="ChEBI" id="CHEBI:64479"/>
        <dbReference type="ChEBI" id="CHEBI:78846"/>
        <dbReference type="ChEBI" id="CHEBI:149468"/>
        <dbReference type="EC" id="2.3.1.47"/>
    </reaction>
</comment>
<comment type="cofactor">
    <cofactor evidence="1">
        <name>pyridoxal 5'-phosphate</name>
        <dbReference type="ChEBI" id="CHEBI:597326"/>
    </cofactor>
</comment>
<comment type="pathway">
    <text>Cofactor biosynthesis; biotin biosynthesis.</text>
</comment>
<comment type="subunit">
    <text evidence="1">Homodimer.</text>
</comment>
<comment type="similarity">
    <text evidence="2">Belongs to the class-II pyridoxal-phosphate-dependent aminotransferase family. BioF subfamily.</text>
</comment>
<reference key="1">
    <citation type="journal article" date="2007" name="Nat. Biotechnol.">
        <title>Comparative analysis of the complete genome sequence of the plant growth-promoting bacterium Bacillus amyloliquefaciens FZB42.</title>
        <authorList>
            <person name="Chen X.H."/>
            <person name="Koumoutsi A."/>
            <person name="Scholz R."/>
            <person name="Eisenreich A."/>
            <person name="Schneider K."/>
            <person name="Heinemeyer I."/>
            <person name="Morgenstern B."/>
            <person name="Voss B."/>
            <person name="Hess W.R."/>
            <person name="Reva O."/>
            <person name="Junge H."/>
            <person name="Voigt B."/>
            <person name="Jungblut P.R."/>
            <person name="Vater J."/>
            <person name="Suessmuth R."/>
            <person name="Liesegang H."/>
            <person name="Strittmatter A."/>
            <person name="Gottschalk G."/>
            <person name="Borriss R."/>
        </authorList>
    </citation>
    <scope>NUCLEOTIDE SEQUENCE [LARGE SCALE GENOMIC DNA]</scope>
    <source>
        <strain>DSM 23117 / BGSC 10A6 / LMG 26770 / FZB42</strain>
    </source>
</reference>
<sequence length="391" mass="43176">MKEFEFLKAELDKMKENKTWQQMKQIETKQGPSVEVKGENVIQLSSNNYLGLTSHPRLVEAAKRAAEEFGAGTGSVRTIAGTFTMHNELEKKLANFKKTEAALVFQSGFTTNQGVLSSILTKEDIVISDELNHASIIDGIRLTKADKKVYRHVDMDDLERVLKKSMNYRMRLIVTDGVFSMDGNIAPLPDIVKLAEAYDAFVMVDDAHASGVLGKNGRGTVNHFGLDGRVHIQVGTLSKAIGVLGGYAAGSQVLIDYLRHKGRPFLFSTSHPPAVTAACIEAIDVLLEEPEHMEKLWENTAYFKDKLVQMGLTLTKSETPIVPILIGEEEKAQALSDLLLTRGVFAQSIVYPTVAQGKARIRTIITAEHTNEELDRALEVIRSAAKELQLV</sequence>
<dbReference type="EC" id="2.3.1.47"/>
<dbReference type="EMBL" id="CP000560">
    <property type="protein sequence ID" value="ABS74047.1"/>
    <property type="molecule type" value="Genomic_DNA"/>
</dbReference>
<dbReference type="SMR" id="A7Z4X1"/>
<dbReference type="KEGG" id="bay:RBAM_016840"/>
<dbReference type="HOGENOM" id="CLU_015846_11_0_9"/>
<dbReference type="UniPathway" id="UPA00078"/>
<dbReference type="Proteomes" id="UP000001120">
    <property type="component" value="Chromosome"/>
</dbReference>
<dbReference type="GO" id="GO:0008710">
    <property type="term" value="F:8-amino-7-oxononanoate synthase activity"/>
    <property type="evidence" value="ECO:0000250"/>
    <property type="project" value="UniProtKB"/>
</dbReference>
<dbReference type="GO" id="GO:0008890">
    <property type="term" value="F:glycine C-acetyltransferase activity"/>
    <property type="evidence" value="ECO:0000250"/>
    <property type="project" value="UniProtKB"/>
</dbReference>
<dbReference type="GO" id="GO:0030170">
    <property type="term" value="F:pyridoxal phosphate binding"/>
    <property type="evidence" value="ECO:0000250"/>
    <property type="project" value="UniProtKB"/>
</dbReference>
<dbReference type="GO" id="GO:0009102">
    <property type="term" value="P:biotin biosynthetic process"/>
    <property type="evidence" value="ECO:0000250"/>
    <property type="project" value="UniProtKB"/>
</dbReference>
<dbReference type="CDD" id="cd06454">
    <property type="entry name" value="KBL_like"/>
    <property type="match status" value="1"/>
</dbReference>
<dbReference type="FunFam" id="3.40.640.10:FF:000006">
    <property type="entry name" value="5-aminolevulinate synthase, mitochondrial"/>
    <property type="match status" value="1"/>
</dbReference>
<dbReference type="Gene3D" id="3.90.1150.10">
    <property type="entry name" value="Aspartate Aminotransferase, domain 1"/>
    <property type="match status" value="1"/>
</dbReference>
<dbReference type="Gene3D" id="3.40.640.10">
    <property type="entry name" value="Type I PLP-dependent aspartate aminotransferase-like (Major domain)"/>
    <property type="match status" value="1"/>
</dbReference>
<dbReference type="InterPro" id="IPR001917">
    <property type="entry name" value="Aminotrans_II_pyridoxalP_BS"/>
</dbReference>
<dbReference type="InterPro" id="IPR004839">
    <property type="entry name" value="Aminotransferase_I/II_large"/>
</dbReference>
<dbReference type="InterPro" id="IPR050087">
    <property type="entry name" value="AON_synthase_class-II"/>
</dbReference>
<dbReference type="InterPro" id="IPR010962">
    <property type="entry name" value="AONS_Archaea/Firmicutes"/>
</dbReference>
<dbReference type="InterPro" id="IPR004723">
    <property type="entry name" value="AONS_Archaea/Proteobacteria"/>
</dbReference>
<dbReference type="InterPro" id="IPR015424">
    <property type="entry name" value="PyrdxlP-dep_Trfase"/>
</dbReference>
<dbReference type="InterPro" id="IPR015421">
    <property type="entry name" value="PyrdxlP-dep_Trfase_major"/>
</dbReference>
<dbReference type="InterPro" id="IPR015422">
    <property type="entry name" value="PyrdxlP-dep_Trfase_small"/>
</dbReference>
<dbReference type="NCBIfam" id="TIGR00858">
    <property type="entry name" value="bioF"/>
    <property type="match status" value="1"/>
</dbReference>
<dbReference type="NCBIfam" id="TIGR01825">
    <property type="entry name" value="gly_Cac_T_rel"/>
    <property type="match status" value="1"/>
</dbReference>
<dbReference type="NCBIfam" id="NF005394">
    <property type="entry name" value="PRK06939.1"/>
    <property type="match status" value="1"/>
</dbReference>
<dbReference type="PANTHER" id="PTHR13693">
    <property type="entry name" value="CLASS II AMINOTRANSFERASE/8-AMINO-7-OXONONANOATE SYNTHASE"/>
    <property type="match status" value="1"/>
</dbReference>
<dbReference type="PANTHER" id="PTHR13693:SF3">
    <property type="entry name" value="LD36009P"/>
    <property type="match status" value="1"/>
</dbReference>
<dbReference type="Pfam" id="PF00155">
    <property type="entry name" value="Aminotran_1_2"/>
    <property type="match status" value="1"/>
</dbReference>
<dbReference type="SUPFAM" id="SSF53383">
    <property type="entry name" value="PLP-dependent transferases"/>
    <property type="match status" value="1"/>
</dbReference>
<dbReference type="PROSITE" id="PS00599">
    <property type="entry name" value="AA_TRANSFER_CLASS_2"/>
    <property type="match status" value="1"/>
</dbReference>
<name>BIOF1_BACVZ</name>
<gene>
    <name type="ordered locus">RBAM_016840</name>
</gene>
<accession>A7Z4X1</accession>
<evidence type="ECO:0000250" key="1"/>
<evidence type="ECO:0000305" key="2"/>
<organism>
    <name type="scientific">Bacillus velezensis (strain DSM 23117 / BGSC 10A6 / LMG 26770 / FZB42)</name>
    <name type="common">Bacillus amyloliquefaciens subsp. plantarum</name>
    <dbReference type="NCBI Taxonomy" id="326423"/>
    <lineage>
        <taxon>Bacteria</taxon>
        <taxon>Bacillati</taxon>
        <taxon>Bacillota</taxon>
        <taxon>Bacilli</taxon>
        <taxon>Bacillales</taxon>
        <taxon>Bacillaceae</taxon>
        <taxon>Bacillus</taxon>
        <taxon>Bacillus amyloliquefaciens group</taxon>
    </lineage>
</organism>
<feature type="chain" id="PRO_0000380903" description="8-amino-7-oxononanoate synthase 1">
    <location>
        <begin position="1"/>
        <end position="391"/>
    </location>
</feature>
<feature type="binding site" evidence="1">
    <location>
        <begin position="108"/>
        <end position="109"/>
    </location>
    <ligand>
        <name>pyridoxal 5'-phosphate</name>
        <dbReference type="ChEBI" id="CHEBI:597326"/>
    </ligand>
</feature>
<feature type="binding site" evidence="1">
    <location>
        <position position="133"/>
    </location>
    <ligand>
        <name>substrate</name>
    </ligand>
</feature>
<feature type="binding site" evidence="1">
    <location>
        <position position="180"/>
    </location>
    <ligand>
        <name>pyridoxal 5'-phosphate</name>
        <dbReference type="ChEBI" id="CHEBI:597326"/>
    </ligand>
</feature>
<feature type="binding site" evidence="1">
    <location>
        <begin position="205"/>
        <end position="208"/>
    </location>
    <ligand>
        <name>pyridoxal 5'-phosphate</name>
        <dbReference type="ChEBI" id="CHEBI:597326"/>
    </ligand>
</feature>
<feature type="binding site" evidence="1">
    <location>
        <begin position="236"/>
        <end position="239"/>
    </location>
    <ligand>
        <name>pyridoxal 5'-phosphate</name>
        <dbReference type="ChEBI" id="CHEBI:597326"/>
    </ligand>
</feature>
<feature type="binding site" evidence="1">
    <location>
        <position position="353"/>
    </location>
    <ligand>
        <name>substrate</name>
    </ligand>
</feature>
<feature type="modified residue" description="N6-(pyridoxal phosphate)lysine" evidence="1">
    <location>
        <position position="239"/>
    </location>
</feature>